<feature type="chain" id="PRO_0000377384" description="Transcription factor kayak">
    <location>
        <begin position="1"/>
        <end position="796"/>
    </location>
</feature>
<feature type="domain" description="bZIP" evidence="4">
    <location>
        <begin position="478"/>
        <end position="541"/>
    </location>
</feature>
<feature type="region of interest" description="Disordered" evidence="5">
    <location>
        <begin position="109"/>
        <end position="132"/>
    </location>
</feature>
<feature type="region of interest" description="Disordered" evidence="5">
    <location>
        <begin position="315"/>
        <end position="341"/>
    </location>
</feature>
<feature type="region of interest" description="Disordered" evidence="5">
    <location>
        <begin position="374"/>
        <end position="429"/>
    </location>
</feature>
<feature type="region of interest" description="Disordered" evidence="5">
    <location>
        <begin position="442"/>
        <end position="490"/>
    </location>
</feature>
<feature type="region of interest" description="Basic motif" evidence="4">
    <location>
        <begin position="480"/>
        <end position="499"/>
    </location>
</feature>
<feature type="region of interest" description="Leucine-zipper" evidence="4">
    <location>
        <begin position="506"/>
        <end position="534"/>
    </location>
</feature>
<feature type="region of interest" description="Disordered" evidence="5">
    <location>
        <begin position="569"/>
        <end position="601"/>
    </location>
</feature>
<feature type="region of interest" description="Disordered" evidence="5">
    <location>
        <begin position="642"/>
        <end position="661"/>
    </location>
</feature>
<feature type="region of interest" description="Disordered" evidence="5">
    <location>
        <begin position="774"/>
        <end position="796"/>
    </location>
</feature>
<feature type="compositionally biased region" description="Low complexity" evidence="5">
    <location>
        <begin position="402"/>
        <end position="429"/>
    </location>
</feature>
<feature type="compositionally biased region" description="Polar residues" evidence="5">
    <location>
        <begin position="447"/>
        <end position="457"/>
    </location>
</feature>
<feature type="modified residue" description="Phosphoserine" evidence="2">
    <location>
        <position position="621"/>
    </location>
</feature>
<reference evidence="6" key="1">
    <citation type="journal article" date="2007" name="Nature">
        <title>Evolution of genes and genomes on the Drosophila phylogeny.</title>
        <authorList>
            <consortium name="Drosophila 12 genomes consortium"/>
        </authorList>
    </citation>
    <scope>NUCLEOTIDE SEQUENCE [LARGE SCALE GENOMIC DNA]</scope>
    <source>
        <strain evidence="6">Tucson 15287-2541.00</strain>
    </source>
</reference>
<keyword id="KW-0010">Activator</keyword>
<keyword id="KW-0238">DNA-binding</keyword>
<keyword id="KW-0539">Nucleus</keyword>
<keyword id="KW-0597">Phosphoprotein</keyword>
<keyword id="KW-1185">Reference proteome</keyword>
<keyword id="KW-0804">Transcription</keyword>
<keyword id="KW-0805">Transcription regulation</keyword>
<dbReference type="EMBL" id="CH916377">
    <property type="protein sequence ID" value="EDV90795.1"/>
    <property type="molecule type" value="Genomic_DNA"/>
</dbReference>
<dbReference type="RefSeq" id="XP_001996137.1">
    <property type="nucleotide sequence ID" value="XM_001996101.1"/>
</dbReference>
<dbReference type="SMR" id="B4JYN3"/>
<dbReference type="FunCoup" id="B4JYN3">
    <property type="interactions" value="451"/>
</dbReference>
<dbReference type="STRING" id="7222.B4JYN3"/>
<dbReference type="EnsemblMetazoa" id="XM_001996101.2">
    <property type="protein sequence ID" value="XP_001996137.2"/>
    <property type="gene ID" value="LOC6569643"/>
</dbReference>
<dbReference type="GeneID" id="6569643"/>
<dbReference type="KEGG" id="dgr:6569643"/>
<dbReference type="CTD" id="3772082"/>
<dbReference type="eggNOG" id="KOG1414">
    <property type="taxonomic scope" value="Eukaryota"/>
</dbReference>
<dbReference type="HOGENOM" id="CLU_020183_0_0_1"/>
<dbReference type="InParanoid" id="B4JYN3"/>
<dbReference type="OMA" id="HQSLHFA"/>
<dbReference type="OrthoDB" id="5866312at2759"/>
<dbReference type="PhylomeDB" id="B4JYN3"/>
<dbReference type="ChiTaRS" id="kay">
    <property type="organism name" value="fly"/>
</dbReference>
<dbReference type="Proteomes" id="UP000001070">
    <property type="component" value="Unassembled WGS sequence"/>
</dbReference>
<dbReference type="GO" id="GO:0005634">
    <property type="term" value="C:nucleus"/>
    <property type="evidence" value="ECO:0000250"/>
    <property type="project" value="UniProtKB"/>
</dbReference>
<dbReference type="GO" id="GO:0003677">
    <property type="term" value="F:DNA binding"/>
    <property type="evidence" value="ECO:0000250"/>
    <property type="project" value="UniProtKB"/>
</dbReference>
<dbReference type="GO" id="GO:0000981">
    <property type="term" value="F:DNA-binding transcription factor activity, RNA polymerase II-specific"/>
    <property type="evidence" value="ECO:0007669"/>
    <property type="project" value="TreeGrafter"/>
</dbReference>
<dbReference type="GO" id="GO:0000978">
    <property type="term" value="F:RNA polymerase II cis-regulatory region sequence-specific DNA binding"/>
    <property type="evidence" value="ECO:0007669"/>
    <property type="project" value="TreeGrafter"/>
</dbReference>
<dbReference type="GO" id="GO:0009792">
    <property type="term" value="P:embryo development ending in birth or egg hatching"/>
    <property type="evidence" value="ECO:0000250"/>
    <property type="project" value="UniProtKB"/>
</dbReference>
<dbReference type="CDD" id="cd14721">
    <property type="entry name" value="bZIP_Fos"/>
    <property type="match status" value="1"/>
</dbReference>
<dbReference type="FunFam" id="1.20.5.170:FF:000006">
    <property type="entry name" value="fos-related antigen 2 isoform X1"/>
    <property type="match status" value="1"/>
</dbReference>
<dbReference type="Gene3D" id="1.20.5.170">
    <property type="match status" value="1"/>
</dbReference>
<dbReference type="InterPro" id="IPR000837">
    <property type="entry name" value="AP-1"/>
</dbReference>
<dbReference type="InterPro" id="IPR004827">
    <property type="entry name" value="bZIP"/>
</dbReference>
<dbReference type="InterPro" id="IPR046347">
    <property type="entry name" value="bZIP_sf"/>
</dbReference>
<dbReference type="PANTHER" id="PTHR23351:SF24">
    <property type="entry name" value="ACTIVATING TRANSCRIPTION FACTOR 3-RELATED"/>
    <property type="match status" value="1"/>
</dbReference>
<dbReference type="PANTHER" id="PTHR23351">
    <property type="entry name" value="FOS TRANSCRIPTION FACTOR-RELATED"/>
    <property type="match status" value="1"/>
</dbReference>
<dbReference type="Pfam" id="PF00170">
    <property type="entry name" value="bZIP_1"/>
    <property type="match status" value="1"/>
</dbReference>
<dbReference type="PRINTS" id="PR00042">
    <property type="entry name" value="LEUZIPPRFOS"/>
</dbReference>
<dbReference type="SMART" id="SM00338">
    <property type="entry name" value="BRLZ"/>
    <property type="match status" value="1"/>
</dbReference>
<dbReference type="SUPFAM" id="SSF57959">
    <property type="entry name" value="Leucine zipper domain"/>
    <property type="match status" value="1"/>
</dbReference>
<dbReference type="PROSITE" id="PS50217">
    <property type="entry name" value="BZIP"/>
    <property type="match status" value="1"/>
</dbReference>
<dbReference type="PROSITE" id="PS00036">
    <property type="entry name" value="BZIP_BASIC"/>
    <property type="match status" value="1"/>
</dbReference>
<organism>
    <name type="scientific">Drosophila grimshawi</name>
    <name type="common">Hawaiian fruit fly</name>
    <name type="synonym">Idiomyia grimshawi</name>
    <dbReference type="NCBI Taxonomy" id="7222"/>
    <lineage>
        <taxon>Eukaryota</taxon>
        <taxon>Metazoa</taxon>
        <taxon>Ecdysozoa</taxon>
        <taxon>Arthropoda</taxon>
        <taxon>Hexapoda</taxon>
        <taxon>Insecta</taxon>
        <taxon>Pterygota</taxon>
        <taxon>Neoptera</taxon>
        <taxon>Endopterygota</taxon>
        <taxon>Diptera</taxon>
        <taxon>Brachycera</taxon>
        <taxon>Muscomorpha</taxon>
        <taxon>Ephydroidea</taxon>
        <taxon>Drosophilidae</taxon>
        <taxon>Drosophila</taxon>
        <taxon>Hawaiian Drosophila</taxon>
    </lineage>
</organism>
<evidence type="ECO:0000250" key="1"/>
<evidence type="ECO:0000250" key="2">
    <source>
        <dbReference type="UniProtKB" id="P21525"/>
    </source>
</evidence>
<evidence type="ECO:0000255" key="3"/>
<evidence type="ECO:0000255" key="4">
    <source>
        <dbReference type="PROSITE-ProRule" id="PRU00978"/>
    </source>
</evidence>
<evidence type="ECO:0000256" key="5">
    <source>
        <dbReference type="SAM" id="MobiDB-lite"/>
    </source>
</evidence>
<evidence type="ECO:0000312" key="6">
    <source>
        <dbReference type="EMBL" id="EDV90795.1"/>
    </source>
</evidence>
<protein>
    <recommendedName>
        <fullName evidence="2">Transcription factor kayak</fullName>
    </recommendedName>
</protein>
<comment type="function">
    <text evidence="2">Developmentally regulated transcription factor AP-1 binds and recognizes the enhancer DNA sequence: 5'-TGA[CG]TCA-3'. May play a role in the function or determination of a particular subset of cells in the developing embryo. It is able to carry out its function either independently of or in conjunction with Jra (By similarity).</text>
</comment>
<comment type="subunit">
    <text evidence="1">Homodimer. Heterodimer with Jra. The kay-Jra heterodimer binds more stably to the AP-1 site than either of the two proteins alone (By similarity).</text>
</comment>
<comment type="subcellular location">
    <subcellularLocation>
        <location evidence="2 4">Nucleus</location>
    </subcellularLocation>
</comment>
<comment type="similarity">
    <text evidence="3">Belongs to the bZIP family. Fos subfamily.</text>
</comment>
<sequence length="796" mass="86674">MKNLNGRAHNACYHPYYQQQLQQQQQQQQQHQQQQLLQQQQQQLLQQQQQQLQQQLQLPYATQYTQQQQQQQQQYNQQQYYNQQLQQQQQQQQQQHLLRQQQLLPTQSAYQQQQSKQSYNNNNNSNSNSNTSAANMTAMTARVNMHAATVATAHSNGNSNANANATTAAMAAMCQMQSFLSHQQQQQQQQQQQQQYNNNCAHINYNQQQQQQQQQQQQQQQLPTATTATTTNGDKLALDSASEIANFLASELFMQQLVTFDGIQSAPTLTTPTLTPTTLRTIEETIFELTTETQNVPFQAGFKPPPLTSLCNVTVVNNNNNNNNNNNNNSSNNNNNNSNTVTTTAAAAGNLTLASPMSTMSTLNTNPQLDLLGFNCGSVPESDSEQSNVSWNVGGPHDDQSTTDTSSAATDSTSYQNGGHMFGNNGSNGSGVNNFTGSLAGVGSAGRGTSSTSNNATPARRGGGRRPNKSANMSPEEEEKRRVRRERNKLAAARCRKRRVDQTNELSEEVDGLLKKNEDLKKEIEILTNTRHQLNFVLEAHRPTCQKVRDDLLSVTTCNGLIAPTAMLSSGSNGSHHHNSNSNNSNNNNSNNNNNSNSNDSSCGTITGFDASLNSTGRSNSPLDLKPVLIDDQLLVNIKHEPHDAGLDSSSSLDQDGPPAAKRFALPDIATLKPHSASLTTPTGPVASLNTPMSGMAPTAFGIHAKPMPKTRPNTLNVNQSLAQPGNIAIGKTPMQIEGVPIQTPSAGNFNFDSLMAGGTGLTPVSGPLVPTCSSQNKHPLELPTPTSEPSKLVSL</sequence>
<proteinExistence type="inferred from homology"/>
<gene>
    <name evidence="2" type="primary">kay</name>
    <name type="ORF">GH14331</name>
</gene>
<accession>B4JYN3</accession>
<name>FOSL_DROGR</name>